<dbReference type="EC" id="2.7.7.3" evidence="1"/>
<dbReference type="EMBL" id="CP000726">
    <property type="protein sequence ID" value="ABS33009.1"/>
    <property type="molecule type" value="Genomic_DNA"/>
</dbReference>
<dbReference type="RefSeq" id="WP_003388467.1">
    <property type="nucleotide sequence ID" value="NC_009697.1"/>
</dbReference>
<dbReference type="SMR" id="A7FW59"/>
<dbReference type="GeneID" id="5186749"/>
<dbReference type="KEGG" id="cba:CLB_2366"/>
<dbReference type="HOGENOM" id="CLU_100149_0_1_9"/>
<dbReference type="UniPathway" id="UPA00241">
    <property type="reaction ID" value="UER00355"/>
</dbReference>
<dbReference type="GO" id="GO:0005737">
    <property type="term" value="C:cytoplasm"/>
    <property type="evidence" value="ECO:0007669"/>
    <property type="project" value="UniProtKB-SubCell"/>
</dbReference>
<dbReference type="GO" id="GO:0005524">
    <property type="term" value="F:ATP binding"/>
    <property type="evidence" value="ECO:0007669"/>
    <property type="project" value="UniProtKB-KW"/>
</dbReference>
<dbReference type="GO" id="GO:0004595">
    <property type="term" value="F:pantetheine-phosphate adenylyltransferase activity"/>
    <property type="evidence" value="ECO:0007669"/>
    <property type="project" value="UniProtKB-UniRule"/>
</dbReference>
<dbReference type="GO" id="GO:0015937">
    <property type="term" value="P:coenzyme A biosynthetic process"/>
    <property type="evidence" value="ECO:0007669"/>
    <property type="project" value="UniProtKB-UniRule"/>
</dbReference>
<dbReference type="CDD" id="cd02163">
    <property type="entry name" value="PPAT"/>
    <property type="match status" value="1"/>
</dbReference>
<dbReference type="Gene3D" id="3.40.50.620">
    <property type="entry name" value="HUPs"/>
    <property type="match status" value="1"/>
</dbReference>
<dbReference type="HAMAP" id="MF_00151">
    <property type="entry name" value="PPAT_bact"/>
    <property type="match status" value="1"/>
</dbReference>
<dbReference type="InterPro" id="IPR004821">
    <property type="entry name" value="Cyt_trans-like"/>
</dbReference>
<dbReference type="InterPro" id="IPR001980">
    <property type="entry name" value="PPAT"/>
</dbReference>
<dbReference type="InterPro" id="IPR014729">
    <property type="entry name" value="Rossmann-like_a/b/a_fold"/>
</dbReference>
<dbReference type="NCBIfam" id="TIGR01510">
    <property type="entry name" value="coaD_prev_kdtB"/>
    <property type="match status" value="1"/>
</dbReference>
<dbReference type="NCBIfam" id="TIGR00125">
    <property type="entry name" value="cyt_tran_rel"/>
    <property type="match status" value="1"/>
</dbReference>
<dbReference type="PANTHER" id="PTHR21342">
    <property type="entry name" value="PHOSPHOPANTETHEINE ADENYLYLTRANSFERASE"/>
    <property type="match status" value="1"/>
</dbReference>
<dbReference type="PANTHER" id="PTHR21342:SF1">
    <property type="entry name" value="PHOSPHOPANTETHEINE ADENYLYLTRANSFERASE"/>
    <property type="match status" value="1"/>
</dbReference>
<dbReference type="Pfam" id="PF01467">
    <property type="entry name" value="CTP_transf_like"/>
    <property type="match status" value="1"/>
</dbReference>
<dbReference type="PRINTS" id="PR01020">
    <property type="entry name" value="LPSBIOSNTHSS"/>
</dbReference>
<dbReference type="SUPFAM" id="SSF52374">
    <property type="entry name" value="Nucleotidylyl transferase"/>
    <property type="match status" value="1"/>
</dbReference>
<gene>
    <name evidence="1" type="primary">coaD</name>
    <name type="ordered locus">CLB_2366</name>
</gene>
<organism>
    <name type="scientific">Clostridium botulinum (strain ATCC 19397 / Type A)</name>
    <dbReference type="NCBI Taxonomy" id="441770"/>
    <lineage>
        <taxon>Bacteria</taxon>
        <taxon>Bacillati</taxon>
        <taxon>Bacillota</taxon>
        <taxon>Clostridia</taxon>
        <taxon>Eubacteriales</taxon>
        <taxon>Clostridiaceae</taxon>
        <taxon>Clostridium</taxon>
    </lineage>
</organism>
<sequence>MKTAVYPGSFDPITKGHLNIIKRASKVCDKLIVAVLVNPEKKGLFSVDERVEMIKRVTKKHSNVEVQCFSGLLIDFMKEKKSKVIIKGLRTMSDFEYEFKMALMNNKLDPNIETVFMMTNAKYSYLSSSSVKQVAMFGGCIKDLVPDEIIPDIKKKINHKKECI</sequence>
<accession>A7FW59</accession>
<protein>
    <recommendedName>
        <fullName evidence="1">Phosphopantetheine adenylyltransferase</fullName>
        <ecNumber evidence="1">2.7.7.3</ecNumber>
    </recommendedName>
    <alternativeName>
        <fullName evidence="1">Dephospho-CoA pyrophosphorylase</fullName>
    </alternativeName>
    <alternativeName>
        <fullName evidence="1">Pantetheine-phosphate adenylyltransferase</fullName>
        <shortName evidence="1">PPAT</shortName>
    </alternativeName>
</protein>
<name>COAD_CLOB1</name>
<comment type="function">
    <text evidence="1">Reversibly transfers an adenylyl group from ATP to 4'-phosphopantetheine, yielding dephospho-CoA (dPCoA) and pyrophosphate.</text>
</comment>
<comment type="catalytic activity">
    <reaction evidence="1">
        <text>(R)-4'-phosphopantetheine + ATP + H(+) = 3'-dephospho-CoA + diphosphate</text>
        <dbReference type="Rhea" id="RHEA:19801"/>
        <dbReference type="ChEBI" id="CHEBI:15378"/>
        <dbReference type="ChEBI" id="CHEBI:30616"/>
        <dbReference type="ChEBI" id="CHEBI:33019"/>
        <dbReference type="ChEBI" id="CHEBI:57328"/>
        <dbReference type="ChEBI" id="CHEBI:61723"/>
        <dbReference type="EC" id="2.7.7.3"/>
    </reaction>
</comment>
<comment type="cofactor">
    <cofactor evidence="1">
        <name>Mg(2+)</name>
        <dbReference type="ChEBI" id="CHEBI:18420"/>
    </cofactor>
</comment>
<comment type="pathway">
    <text evidence="1">Cofactor biosynthesis; coenzyme A biosynthesis; CoA from (R)-pantothenate: step 4/5.</text>
</comment>
<comment type="subunit">
    <text evidence="1">Homohexamer.</text>
</comment>
<comment type="subcellular location">
    <subcellularLocation>
        <location evidence="1">Cytoplasm</location>
    </subcellularLocation>
</comment>
<comment type="similarity">
    <text evidence="1">Belongs to the bacterial CoaD family.</text>
</comment>
<feature type="chain" id="PRO_1000011125" description="Phosphopantetheine adenylyltransferase">
    <location>
        <begin position="1"/>
        <end position="164"/>
    </location>
</feature>
<feature type="binding site" evidence="1">
    <location>
        <begin position="9"/>
        <end position="10"/>
    </location>
    <ligand>
        <name>ATP</name>
        <dbReference type="ChEBI" id="CHEBI:30616"/>
    </ligand>
</feature>
<feature type="binding site" evidence="1">
    <location>
        <position position="9"/>
    </location>
    <ligand>
        <name>substrate</name>
    </ligand>
</feature>
<feature type="binding site" evidence="1">
    <location>
        <position position="17"/>
    </location>
    <ligand>
        <name>ATP</name>
        <dbReference type="ChEBI" id="CHEBI:30616"/>
    </ligand>
</feature>
<feature type="binding site" evidence="1">
    <location>
        <position position="41"/>
    </location>
    <ligand>
        <name>substrate</name>
    </ligand>
</feature>
<feature type="binding site" evidence="1">
    <location>
        <position position="73"/>
    </location>
    <ligand>
        <name>substrate</name>
    </ligand>
</feature>
<feature type="binding site" evidence="1">
    <location>
        <position position="87"/>
    </location>
    <ligand>
        <name>substrate</name>
    </ligand>
</feature>
<feature type="binding site" evidence="1">
    <location>
        <begin position="88"/>
        <end position="90"/>
    </location>
    <ligand>
        <name>ATP</name>
        <dbReference type="ChEBI" id="CHEBI:30616"/>
    </ligand>
</feature>
<feature type="binding site" evidence="1">
    <location>
        <position position="98"/>
    </location>
    <ligand>
        <name>ATP</name>
        <dbReference type="ChEBI" id="CHEBI:30616"/>
    </ligand>
</feature>
<feature type="binding site" evidence="1">
    <location>
        <begin position="123"/>
        <end position="129"/>
    </location>
    <ligand>
        <name>ATP</name>
        <dbReference type="ChEBI" id="CHEBI:30616"/>
    </ligand>
</feature>
<feature type="site" description="Transition state stabilizer" evidence="1">
    <location>
        <position position="17"/>
    </location>
</feature>
<evidence type="ECO:0000255" key="1">
    <source>
        <dbReference type="HAMAP-Rule" id="MF_00151"/>
    </source>
</evidence>
<reference key="1">
    <citation type="journal article" date="2007" name="PLoS ONE">
        <title>Analysis of the neurotoxin complex genes in Clostridium botulinum A1-A4 and B1 strains: BoNT/A3, /Ba4 and /B1 clusters are located within plasmids.</title>
        <authorList>
            <person name="Smith T.J."/>
            <person name="Hill K.K."/>
            <person name="Foley B.T."/>
            <person name="Detter J.C."/>
            <person name="Munk A.C."/>
            <person name="Bruce D.C."/>
            <person name="Doggett N.A."/>
            <person name="Smith L.A."/>
            <person name="Marks J.D."/>
            <person name="Xie G."/>
            <person name="Brettin T.S."/>
        </authorList>
    </citation>
    <scope>NUCLEOTIDE SEQUENCE [LARGE SCALE GENOMIC DNA]</scope>
    <source>
        <strain>ATCC 19397 / Type A</strain>
    </source>
</reference>
<proteinExistence type="inferred from homology"/>
<keyword id="KW-0067">ATP-binding</keyword>
<keyword id="KW-0173">Coenzyme A biosynthesis</keyword>
<keyword id="KW-0963">Cytoplasm</keyword>
<keyword id="KW-0460">Magnesium</keyword>
<keyword id="KW-0547">Nucleotide-binding</keyword>
<keyword id="KW-0548">Nucleotidyltransferase</keyword>
<keyword id="KW-0808">Transferase</keyword>